<reference key="1">
    <citation type="submission" date="2008-05" db="EMBL/GenBank/DDBJ databases">
        <title>Complete genome sequence of Clostridium botulinum E3 str. Alaska E43.</title>
        <authorList>
            <person name="Brinkac L.M."/>
            <person name="Brown J.L."/>
            <person name="Bruce D."/>
            <person name="Detter C."/>
            <person name="Munk C."/>
            <person name="Smith L.A."/>
            <person name="Smith T.J."/>
            <person name="Sutton G."/>
            <person name="Brettin T.S."/>
        </authorList>
    </citation>
    <scope>NUCLEOTIDE SEQUENCE [LARGE SCALE GENOMIC DNA]</scope>
    <source>
        <strain>Alaska E43 / Type E3</strain>
    </source>
</reference>
<feature type="chain" id="PRO_1000094490" description="3-dehydroquinate synthase">
    <location>
        <begin position="1"/>
        <end position="350"/>
    </location>
</feature>
<feature type="binding site" evidence="1">
    <location>
        <begin position="106"/>
        <end position="110"/>
    </location>
    <ligand>
        <name>NAD(+)</name>
        <dbReference type="ChEBI" id="CHEBI:57540"/>
    </ligand>
</feature>
<feature type="binding site" evidence="1">
    <location>
        <begin position="130"/>
        <end position="131"/>
    </location>
    <ligand>
        <name>NAD(+)</name>
        <dbReference type="ChEBI" id="CHEBI:57540"/>
    </ligand>
</feature>
<feature type="binding site" evidence="1">
    <location>
        <position position="143"/>
    </location>
    <ligand>
        <name>NAD(+)</name>
        <dbReference type="ChEBI" id="CHEBI:57540"/>
    </ligand>
</feature>
<feature type="binding site" evidence="1">
    <location>
        <position position="152"/>
    </location>
    <ligand>
        <name>NAD(+)</name>
        <dbReference type="ChEBI" id="CHEBI:57540"/>
    </ligand>
</feature>
<feature type="binding site" evidence="1">
    <location>
        <position position="185"/>
    </location>
    <ligand>
        <name>Zn(2+)</name>
        <dbReference type="ChEBI" id="CHEBI:29105"/>
    </ligand>
</feature>
<feature type="binding site" evidence="1">
    <location>
        <position position="246"/>
    </location>
    <ligand>
        <name>Zn(2+)</name>
        <dbReference type="ChEBI" id="CHEBI:29105"/>
    </ligand>
</feature>
<feature type="binding site" evidence="1">
    <location>
        <position position="263"/>
    </location>
    <ligand>
        <name>Zn(2+)</name>
        <dbReference type="ChEBI" id="CHEBI:29105"/>
    </ligand>
</feature>
<accession>B2UYK8</accession>
<proteinExistence type="inferred from homology"/>
<comment type="function">
    <text evidence="1">Catalyzes the conversion of 3-deoxy-D-arabino-heptulosonate 7-phosphate (DAHP) to dehydroquinate (DHQ).</text>
</comment>
<comment type="catalytic activity">
    <reaction evidence="1">
        <text>7-phospho-2-dehydro-3-deoxy-D-arabino-heptonate = 3-dehydroquinate + phosphate</text>
        <dbReference type="Rhea" id="RHEA:21968"/>
        <dbReference type="ChEBI" id="CHEBI:32364"/>
        <dbReference type="ChEBI" id="CHEBI:43474"/>
        <dbReference type="ChEBI" id="CHEBI:58394"/>
        <dbReference type="EC" id="4.2.3.4"/>
    </reaction>
</comment>
<comment type="cofactor">
    <cofactor evidence="1">
        <name>Co(2+)</name>
        <dbReference type="ChEBI" id="CHEBI:48828"/>
    </cofactor>
    <cofactor evidence="1">
        <name>Zn(2+)</name>
        <dbReference type="ChEBI" id="CHEBI:29105"/>
    </cofactor>
    <text evidence="1">Binds 1 divalent metal cation per subunit. Can use either Co(2+) or Zn(2+).</text>
</comment>
<comment type="cofactor">
    <cofactor evidence="1">
        <name>NAD(+)</name>
        <dbReference type="ChEBI" id="CHEBI:57540"/>
    </cofactor>
</comment>
<comment type="pathway">
    <text evidence="1">Metabolic intermediate biosynthesis; chorismate biosynthesis; chorismate from D-erythrose 4-phosphate and phosphoenolpyruvate: step 2/7.</text>
</comment>
<comment type="subcellular location">
    <subcellularLocation>
        <location evidence="1">Cytoplasm</location>
    </subcellularLocation>
</comment>
<comment type="similarity">
    <text evidence="1">Belongs to the sugar phosphate cyclases superfamily. Dehydroquinate synthase family.</text>
</comment>
<sequence>MKELVVDLKEKSYSIIIKKGLINELSNEINKVYKGKKIFILTDENVNYHYGDKVKDSLINNGYDVKKIVLKPGEETKSFNTLPKIYNEFLDFKLTRSDLIITLGGGVIGDLGGFAASTFLRGIDFIQVPTSLLAQVDSSVGGKVAVDLDRGKNLVGSFYHPKVVLIDPDVLITLEEKFFKDGMAEVIKYGCIKDKEFFYKLKEFKSKDEVLDNIEDIIYTCCNIKRIVVENDEKDKGERMLLNFGHTLGHAIEAYYNFNKYTHGEAVGIGMYKIIKISEEKGIMPKGCADEIKDILIQYSLPYDIEIENSDEILETISLDKKNINSVLKIVLLESIGQSFLKSTNIEFFK</sequence>
<evidence type="ECO:0000255" key="1">
    <source>
        <dbReference type="HAMAP-Rule" id="MF_00110"/>
    </source>
</evidence>
<keyword id="KW-0028">Amino-acid biosynthesis</keyword>
<keyword id="KW-0057">Aromatic amino acid biosynthesis</keyword>
<keyword id="KW-0170">Cobalt</keyword>
<keyword id="KW-0963">Cytoplasm</keyword>
<keyword id="KW-0456">Lyase</keyword>
<keyword id="KW-0479">Metal-binding</keyword>
<keyword id="KW-0520">NAD</keyword>
<keyword id="KW-0547">Nucleotide-binding</keyword>
<keyword id="KW-0862">Zinc</keyword>
<protein>
    <recommendedName>
        <fullName evidence="1">3-dehydroquinate synthase</fullName>
        <shortName evidence="1">DHQS</shortName>
        <ecNumber evidence="1">4.2.3.4</ecNumber>
    </recommendedName>
</protein>
<organism>
    <name type="scientific">Clostridium botulinum (strain Alaska E43 / Type E3)</name>
    <dbReference type="NCBI Taxonomy" id="508767"/>
    <lineage>
        <taxon>Bacteria</taxon>
        <taxon>Bacillati</taxon>
        <taxon>Bacillota</taxon>
        <taxon>Clostridia</taxon>
        <taxon>Eubacteriales</taxon>
        <taxon>Clostridiaceae</taxon>
        <taxon>Clostridium</taxon>
    </lineage>
</organism>
<dbReference type="EC" id="4.2.3.4" evidence="1"/>
<dbReference type="EMBL" id="CP001078">
    <property type="protein sequence ID" value="ACD52731.1"/>
    <property type="molecule type" value="Genomic_DNA"/>
</dbReference>
<dbReference type="RefSeq" id="WP_012450809.1">
    <property type="nucleotide sequence ID" value="NC_010723.1"/>
</dbReference>
<dbReference type="SMR" id="B2UYK8"/>
<dbReference type="KEGG" id="cbt:CLH_2893"/>
<dbReference type="HOGENOM" id="CLU_001201_0_1_9"/>
<dbReference type="UniPathway" id="UPA00053">
    <property type="reaction ID" value="UER00085"/>
</dbReference>
<dbReference type="GO" id="GO:0005737">
    <property type="term" value="C:cytoplasm"/>
    <property type="evidence" value="ECO:0007669"/>
    <property type="project" value="UniProtKB-SubCell"/>
</dbReference>
<dbReference type="GO" id="GO:0003856">
    <property type="term" value="F:3-dehydroquinate synthase activity"/>
    <property type="evidence" value="ECO:0007669"/>
    <property type="project" value="UniProtKB-UniRule"/>
</dbReference>
<dbReference type="GO" id="GO:0046872">
    <property type="term" value="F:metal ion binding"/>
    <property type="evidence" value="ECO:0007669"/>
    <property type="project" value="UniProtKB-KW"/>
</dbReference>
<dbReference type="GO" id="GO:0000166">
    <property type="term" value="F:nucleotide binding"/>
    <property type="evidence" value="ECO:0007669"/>
    <property type="project" value="UniProtKB-KW"/>
</dbReference>
<dbReference type="GO" id="GO:0008652">
    <property type="term" value="P:amino acid biosynthetic process"/>
    <property type="evidence" value="ECO:0007669"/>
    <property type="project" value="UniProtKB-KW"/>
</dbReference>
<dbReference type="GO" id="GO:0009073">
    <property type="term" value="P:aromatic amino acid family biosynthetic process"/>
    <property type="evidence" value="ECO:0007669"/>
    <property type="project" value="UniProtKB-KW"/>
</dbReference>
<dbReference type="GO" id="GO:0009423">
    <property type="term" value="P:chorismate biosynthetic process"/>
    <property type="evidence" value="ECO:0007669"/>
    <property type="project" value="UniProtKB-UniRule"/>
</dbReference>
<dbReference type="CDD" id="cd08195">
    <property type="entry name" value="DHQS"/>
    <property type="match status" value="1"/>
</dbReference>
<dbReference type="FunFam" id="3.40.50.1970:FF:000007">
    <property type="entry name" value="Pentafunctional AROM polypeptide"/>
    <property type="match status" value="1"/>
</dbReference>
<dbReference type="Gene3D" id="3.40.50.1970">
    <property type="match status" value="1"/>
</dbReference>
<dbReference type="Gene3D" id="1.20.1090.10">
    <property type="entry name" value="Dehydroquinate synthase-like - alpha domain"/>
    <property type="match status" value="1"/>
</dbReference>
<dbReference type="HAMAP" id="MF_00110">
    <property type="entry name" value="DHQ_synthase"/>
    <property type="match status" value="1"/>
</dbReference>
<dbReference type="InterPro" id="IPR050071">
    <property type="entry name" value="Dehydroquinate_synthase"/>
</dbReference>
<dbReference type="InterPro" id="IPR016037">
    <property type="entry name" value="DHQ_synth_AroB"/>
</dbReference>
<dbReference type="InterPro" id="IPR030963">
    <property type="entry name" value="DHQ_synth_fam"/>
</dbReference>
<dbReference type="InterPro" id="IPR030960">
    <property type="entry name" value="DHQS/DOIS_N"/>
</dbReference>
<dbReference type="InterPro" id="IPR056179">
    <property type="entry name" value="DHQS_C"/>
</dbReference>
<dbReference type="NCBIfam" id="TIGR01357">
    <property type="entry name" value="aroB"/>
    <property type="match status" value="1"/>
</dbReference>
<dbReference type="PANTHER" id="PTHR43622">
    <property type="entry name" value="3-DEHYDROQUINATE SYNTHASE"/>
    <property type="match status" value="1"/>
</dbReference>
<dbReference type="PANTHER" id="PTHR43622:SF7">
    <property type="entry name" value="3-DEHYDROQUINATE SYNTHASE, CHLOROPLASTIC"/>
    <property type="match status" value="1"/>
</dbReference>
<dbReference type="Pfam" id="PF01761">
    <property type="entry name" value="DHQ_synthase"/>
    <property type="match status" value="1"/>
</dbReference>
<dbReference type="Pfam" id="PF24621">
    <property type="entry name" value="DHQS_C"/>
    <property type="match status" value="1"/>
</dbReference>
<dbReference type="PIRSF" id="PIRSF001455">
    <property type="entry name" value="DHQ_synth"/>
    <property type="match status" value="1"/>
</dbReference>
<dbReference type="SUPFAM" id="SSF56796">
    <property type="entry name" value="Dehydroquinate synthase-like"/>
    <property type="match status" value="1"/>
</dbReference>
<name>AROB_CLOBA</name>
<gene>
    <name evidence="1" type="primary">aroB</name>
    <name type="ordered locus">CLH_2893</name>
</gene>